<gene>
    <name type="primary">axhA</name>
    <name type="ORF">AO090701000885</name>
</gene>
<protein>
    <recommendedName>
        <fullName>Probable alpha-L-arabinofuranosidase axhA</fullName>
        <ecNumber>3.2.1.55</ecNumber>
    </recommendedName>
    <alternativeName>
        <fullName>Arabinoxylan arabinofuranohydrolase axhA</fullName>
    </alternativeName>
</protein>
<dbReference type="EC" id="3.2.1.55"/>
<dbReference type="EMBL" id="BA000053">
    <property type="protein sequence ID" value="BAE62533.1"/>
    <property type="molecule type" value="Genomic_DNA"/>
</dbReference>
<dbReference type="RefSeq" id="XP_001823666.1">
    <property type="nucleotide sequence ID" value="XM_001823614.1"/>
</dbReference>
<dbReference type="SMR" id="Q2U7D2"/>
<dbReference type="STRING" id="510516.Q2U7D2"/>
<dbReference type="CAZy" id="GH62">
    <property type="family name" value="Glycoside Hydrolase Family 62"/>
</dbReference>
<dbReference type="GlyCosmos" id="Q2U7D2">
    <property type="glycosylation" value="1 site, No reported glycans"/>
</dbReference>
<dbReference type="EnsemblFungi" id="BAE62533">
    <property type="protein sequence ID" value="BAE62533"/>
    <property type="gene ID" value="AO090701000885"/>
</dbReference>
<dbReference type="GeneID" id="5995723"/>
<dbReference type="KEGG" id="aor:AO090701000885"/>
<dbReference type="VEuPathDB" id="FungiDB:AO090701000885"/>
<dbReference type="HOGENOM" id="CLU_041805_0_0_1"/>
<dbReference type="OMA" id="QYDDWGG"/>
<dbReference type="OrthoDB" id="20803at5052"/>
<dbReference type="Proteomes" id="UP000006564">
    <property type="component" value="Chromosome 5"/>
</dbReference>
<dbReference type="GO" id="GO:0005576">
    <property type="term" value="C:extracellular region"/>
    <property type="evidence" value="ECO:0007669"/>
    <property type="project" value="UniProtKB-SubCell"/>
</dbReference>
<dbReference type="GO" id="GO:0046556">
    <property type="term" value="F:alpha-L-arabinofuranosidase activity"/>
    <property type="evidence" value="ECO:0007669"/>
    <property type="project" value="UniProtKB-EC"/>
</dbReference>
<dbReference type="GO" id="GO:0046373">
    <property type="term" value="P:L-arabinose metabolic process"/>
    <property type="evidence" value="ECO:0007669"/>
    <property type="project" value="InterPro"/>
</dbReference>
<dbReference type="GO" id="GO:0045493">
    <property type="term" value="P:xylan catabolic process"/>
    <property type="evidence" value="ECO:0007669"/>
    <property type="project" value="UniProtKB-KW"/>
</dbReference>
<dbReference type="CDD" id="cd08987">
    <property type="entry name" value="GH62"/>
    <property type="match status" value="1"/>
</dbReference>
<dbReference type="Gene3D" id="2.115.10.20">
    <property type="entry name" value="Glycosyl hydrolase domain, family 43"/>
    <property type="match status" value="1"/>
</dbReference>
<dbReference type="InterPro" id="IPR005193">
    <property type="entry name" value="GH62_arabinosidase"/>
</dbReference>
<dbReference type="InterPro" id="IPR023296">
    <property type="entry name" value="Glyco_hydro_beta-prop_sf"/>
</dbReference>
<dbReference type="PANTHER" id="PTHR40631">
    <property type="entry name" value="ALPHA-L-ARABINOFURANOSIDASE AXHA-2-RELATED"/>
    <property type="match status" value="1"/>
</dbReference>
<dbReference type="PANTHER" id="PTHR40631:SF1">
    <property type="entry name" value="ALPHA-L-ARABINOFURANOSIDASE AXHA-2-RELATED"/>
    <property type="match status" value="1"/>
</dbReference>
<dbReference type="Pfam" id="PF03664">
    <property type="entry name" value="Glyco_hydro_62"/>
    <property type="match status" value="1"/>
</dbReference>
<dbReference type="SUPFAM" id="SSF75005">
    <property type="entry name" value="Arabinanase/levansucrase/invertase"/>
    <property type="match status" value="1"/>
</dbReference>
<evidence type="ECO:0000250" key="1"/>
<evidence type="ECO:0000255" key="2"/>
<evidence type="ECO:0000305" key="3"/>
<keyword id="KW-0119">Carbohydrate metabolism</keyword>
<keyword id="KW-0325">Glycoprotein</keyword>
<keyword id="KW-0326">Glycosidase</keyword>
<keyword id="KW-0378">Hydrolase</keyword>
<keyword id="KW-0624">Polysaccharide degradation</keyword>
<keyword id="KW-1185">Reference proteome</keyword>
<keyword id="KW-0964">Secreted</keyword>
<keyword id="KW-0732">Signal</keyword>
<keyword id="KW-0858">Xylan degradation</keyword>
<sequence>MKVTKKVLDQSLCCTALLALVGGAAAQCALPSSYSWTSTGALAEPKAGWAALKDFTNVVFNGQHIVYGSVADTSGNYGSMNFGPFSDWSEMASASQNAMNQGTVAPTLFYFAPKDVWILAYQWGPTSFSYKTSSDPTDANGWSAAQPLFSGTISDSDTGVIDQTVIGDDTNMYLFFAGDNGKIYRASMPIDNFPGDFGTQSEIILSDTKENLFEAVQVYTVDGQNKYLMIVEAMGANGRYFRSFTADSLDGEWTVQAGTESQPFAGKANSGATWTNDISHGDLVRNNPDQTMTVDPCNLQLLYQGRDPNASGDYNLLPWKPGVLTLQV</sequence>
<feature type="signal peptide" evidence="2">
    <location>
        <begin position="1"/>
        <end position="26"/>
    </location>
</feature>
<feature type="chain" id="PRO_0000393534" description="Probable alpha-L-arabinofuranosidase axhA">
    <location>
        <begin position="27"/>
        <end position="328"/>
    </location>
</feature>
<feature type="glycosylation site" description="N-linked (GlcNAc...) asparagine" evidence="2">
    <location>
        <position position="309"/>
    </location>
</feature>
<name>AXHA_ASPOR</name>
<reference key="1">
    <citation type="journal article" date="2005" name="Nature">
        <title>Genome sequencing and analysis of Aspergillus oryzae.</title>
        <authorList>
            <person name="Machida M."/>
            <person name="Asai K."/>
            <person name="Sano M."/>
            <person name="Tanaka T."/>
            <person name="Kumagai T."/>
            <person name="Terai G."/>
            <person name="Kusumoto K."/>
            <person name="Arima T."/>
            <person name="Akita O."/>
            <person name="Kashiwagi Y."/>
            <person name="Abe K."/>
            <person name="Gomi K."/>
            <person name="Horiuchi H."/>
            <person name="Kitamoto K."/>
            <person name="Kobayashi T."/>
            <person name="Takeuchi M."/>
            <person name="Denning D.W."/>
            <person name="Galagan J.E."/>
            <person name="Nierman W.C."/>
            <person name="Yu J."/>
            <person name="Archer D.B."/>
            <person name="Bennett J.W."/>
            <person name="Bhatnagar D."/>
            <person name="Cleveland T.E."/>
            <person name="Fedorova N.D."/>
            <person name="Gotoh O."/>
            <person name="Horikawa H."/>
            <person name="Hosoyama A."/>
            <person name="Ichinomiya M."/>
            <person name="Igarashi R."/>
            <person name="Iwashita K."/>
            <person name="Juvvadi P.R."/>
            <person name="Kato M."/>
            <person name="Kato Y."/>
            <person name="Kin T."/>
            <person name="Kokubun A."/>
            <person name="Maeda H."/>
            <person name="Maeyama N."/>
            <person name="Maruyama J."/>
            <person name="Nagasaki H."/>
            <person name="Nakajima T."/>
            <person name="Oda K."/>
            <person name="Okada K."/>
            <person name="Paulsen I."/>
            <person name="Sakamoto K."/>
            <person name="Sawano T."/>
            <person name="Takahashi M."/>
            <person name="Takase K."/>
            <person name="Terabayashi Y."/>
            <person name="Wortman J.R."/>
            <person name="Yamada O."/>
            <person name="Yamagata Y."/>
            <person name="Anazawa H."/>
            <person name="Hata Y."/>
            <person name="Koide Y."/>
            <person name="Komori T."/>
            <person name="Koyama Y."/>
            <person name="Minetoki T."/>
            <person name="Suharnan S."/>
            <person name="Tanaka A."/>
            <person name="Isono K."/>
            <person name="Kuhara S."/>
            <person name="Ogasawara N."/>
            <person name="Kikuchi H."/>
        </authorList>
    </citation>
    <scope>NUCLEOTIDE SEQUENCE [LARGE SCALE GENOMIC DNA]</scope>
    <source>
        <strain>ATCC 42149 / RIB 40</strain>
    </source>
</reference>
<accession>Q2U7D2</accession>
<organism>
    <name type="scientific">Aspergillus oryzae (strain ATCC 42149 / RIB 40)</name>
    <name type="common">Yellow koji mold</name>
    <dbReference type="NCBI Taxonomy" id="510516"/>
    <lineage>
        <taxon>Eukaryota</taxon>
        <taxon>Fungi</taxon>
        <taxon>Dikarya</taxon>
        <taxon>Ascomycota</taxon>
        <taxon>Pezizomycotina</taxon>
        <taxon>Eurotiomycetes</taxon>
        <taxon>Eurotiomycetidae</taxon>
        <taxon>Eurotiales</taxon>
        <taxon>Aspergillaceae</taxon>
        <taxon>Aspergillus</taxon>
        <taxon>Aspergillus subgen. Circumdati</taxon>
    </lineage>
</organism>
<proteinExistence type="inferred from homology"/>
<comment type="function">
    <text evidence="1">Alpha-L-arabinofuranosidase involved in the hydrolysis of xylan, a major structural heterogeneous polysaccharide found in plant biomass representing the second most abundant polysaccharide in the biosphere, after cellulose. Releases L-arabinose from arabinoxylan (By similarity).</text>
</comment>
<comment type="catalytic activity">
    <reaction>
        <text>Hydrolysis of terminal non-reducing alpha-L-arabinofuranoside residues in alpha-L-arabinosides.</text>
        <dbReference type="EC" id="3.2.1.55"/>
    </reaction>
</comment>
<comment type="subcellular location">
    <subcellularLocation>
        <location evidence="1">Secreted</location>
    </subcellularLocation>
</comment>
<comment type="similarity">
    <text evidence="3">Belongs to the glycosyl hydrolase 62 family.</text>
</comment>